<evidence type="ECO:0000255" key="1">
    <source>
        <dbReference type="HAMAP-Rule" id="MF_01550"/>
    </source>
</evidence>
<comment type="function">
    <text evidence="1">Catalyzes the conversion of pppGpp to ppGpp. Guanosine pentaphosphate (pppGpp) is a cytoplasmic signaling molecule which together with ppGpp controls the 'stringent response', an adaptive process that allows bacteria to respond to amino acid starvation, resulting in the coordinated regulation of numerous cellular activities.</text>
</comment>
<comment type="catalytic activity">
    <reaction evidence="1">
        <text>guanosine 3'-diphosphate 5'-triphosphate + H2O = guanosine 3',5'-bis(diphosphate) + phosphate + H(+)</text>
        <dbReference type="Rhea" id="RHEA:13073"/>
        <dbReference type="ChEBI" id="CHEBI:15377"/>
        <dbReference type="ChEBI" id="CHEBI:15378"/>
        <dbReference type="ChEBI" id="CHEBI:43474"/>
        <dbReference type="ChEBI" id="CHEBI:77828"/>
        <dbReference type="ChEBI" id="CHEBI:142410"/>
        <dbReference type="EC" id="3.6.1.40"/>
    </reaction>
</comment>
<comment type="pathway">
    <text evidence="1">Purine metabolism; ppGpp biosynthesis; ppGpp from GTP: step 2/2.</text>
</comment>
<comment type="similarity">
    <text evidence="1">Belongs to the GppA/Ppx family. GppA subfamily.</text>
</comment>
<dbReference type="EC" id="3.6.1.40" evidence="1"/>
<dbReference type="EMBL" id="AE005674">
    <property type="protein sequence ID" value="AAN45289.2"/>
    <property type="molecule type" value="Genomic_DNA"/>
</dbReference>
<dbReference type="EMBL" id="AE014073">
    <property type="protein sequence ID" value="AAP18908.1"/>
    <property type="molecule type" value="Genomic_DNA"/>
</dbReference>
<dbReference type="RefSeq" id="NP_709582.2">
    <property type="nucleotide sequence ID" value="NC_004337.2"/>
</dbReference>
<dbReference type="RefSeq" id="WP_000535982.1">
    <property type="nucleotide sequence ID" value="NZ_WPGW01000028.1"/>
</dbReference>
<dbReference type="SMR" id="Q83PI3"/>
<dbReference type="STRING" id="198214.SF3852"/>
<dbReference type="PaxDb" id="198214-SF3852"/>
<dbReference type="GeneID" id="1026029"/>
<dbReference type="KEGG" id="sfl:SF3852"/>
<dbReference type="KEGG" id="sfx:S3907"/>
<dbReference type="PATRIC" id="fig|198214.7.peg.4543"/>
<dbReference type="HOGENOM" id="CLU_025908_4_0_6"/>
<dbReference type="UniPathway" id="UPA00908">
    <property type="reaction ID" value="UER00885"/>
</dbReference>
<dbReference type="Proteomes" id="UP000001006">
    <property type="component" value="Chromosome"/>
</dbReference>
<dbReference type="Proteomes" id="UP000002673">
    <property type="component" value="Chromosome"/>
</dbReference>
<dbReference type="GO" id="GO:0008894">
    <property type="term" value="F:guanosine-5'-triphosphate,3'-diphosphate diphosphatase activity"/>
    <property type="evidence" value="ECO:0007669"/>
    <property type="project" value="UniProtKB-UniRule"/>
</dbReference>
<dbReference type="GO" id="GO:0015974">
    <property type="term" value="P:guanosine pentaphosphate catabolic process"/>
    <property type="evidence" value="ECO:0007669"/>
    <property type="project" value="InterPro"/>
</dbReference>
<dbReference type="GO" id="GO:0015970">
    <property type="term" value="P:guanosine tetraphosphate biosynthetic process"/>
    <property type="evidence" value="ECO:0007669"/>
    <property type="project" value="UniProtKB-UniRule"/>
</dbReference>
<dbReference type="GO" id="GO:0015949">
    <property type="term" value="P:nucleobase-containing small molecule interconversion"/>
    <property type="evidence" value="ECO:0007669"/>
    <property type="project" value="TreeGrafter"/>
</dbReference>
<dbReference type="CDD" id="cd24117">
    <property type="entry name" value="ASKHA_NBD_EcGppA-like"/>
    <property type="match status" value="1"/>
</dbReference>
<dbReference type="FunFam" id="1.10.3210.10:FF:000004">
    <property type="entry name" value="Guanosine-5'-triphosphate,3'-diphosphate pyrophosphatase"/>
    <property type="match status" value="1"/>
</dbReference>
<dbReference type="FunFam" id="3.30.420.150:FF:000001">
    <property type="entry name" value="Guanosine-5'-triphosphate,3'-diphosphate pyrophosphatase"/>
    <property type="match status" value="1"/>
</dbReference>
<dbReference type="FunFam" id="3.30.420.40:FF:000023">
    <property type="entry name" value="Guanosine-5'-triphosphate,3'-diphosphate pyrophosphatase"/>
    <property type="match status" value="1"/>
</dbReference>
<dbReference type="Gene3D" id="3.30.420.40">
    <property type="match status" value="1"/>
</dbReference>
<dbReference type="Gene3D" id="3.30.420.150">
    <property type="entry name" value="Exopolyphosphatase. Domain 2"/>
    <property type="match status" value="1"/>
</dbReference>
<dbReference type="Gene3D" id="1.10.3210.10">
    <property type="entry name" value="Hypothetical protein af1432"/>
    <property type="match status" value="1"/>
</dbReference>
<dbReference type="HAMAP" id="MF_01550">
    <property type="entry name" value="GppA"/>
    <property type="match status" value="1"/>
</dbReference>
<dbReference type="InterPro" id="IPR043129">
    <property type="entry name" value="ATPase_NBD"/>
</dbReference>
<dbReference type="InterPro" id="IPR050273">
    <property type="entry name" value="GppA/Ppx_hydrolase"/>
</dbReference>
<dbReference type="InterPro" id="IPR023709">
    <property type="entry name" value="Guo-5TP_3DP_PyrP"/>
</dbReference>
<dbReference type="InterPro" id="IPR048950">
    <property type="entry name" value="Ppx_GppA_C"/>
</dbReference>
<dbReference type="InterPro" id="IPR003695">
    <property type="entry name" value="Ppx_GppA_N"/>
</dbReference>
<dbReference type="InterPro" id="IPR030673">
    <property type="entry name" value="PyroPPase_GppA_Ppx"/>
</dbReference>
<dbReference type="NCBIfam" id="NF008260">
    <property type="entry name" value="PRK11031.1"/>
    <property type="match status" value="1"/>
</dbReference>
<dbReference type="PANTHER" id="PTHR30005">
    <property type="entry name" value="EXOPOLYPHOSPHATASE"/>
    <property type="match status" value="1"/>
</dbReference>
<dbReference type="PANTHER" id="PTHR30005:SF0">
    <property type="entry name" value="RETROGRADE REGULATION PROTEIN 2"/>
    <property type="match status" value="1"/>
</dbReference>
<dbReference type="Pfam" id="PF02541">
    <property type="entry name" value="Ppx-GppA"/>
    <property type="match status" value="1"/>
</dbReference>
<dbReference type="Pfam" id="PF21447">
    <property type="entry name" value="Ppx-GppA_III"/>
    <property type="match status" value="1"/>
</dbReference>
<dbReference type="PIRSF" id="PIRSF001267">
    <property type="entry name" value="Pyrophosphatase_GppA_Ppx"/>
    <property type="match status" value="1"/>
</dbReference>
<dbReference type="SUPFAM" id="SSF53067">
    <property type="entry name" value="Actin-like ATPase domain"/>
    <property type="match status" value="2"/>
</dbReference>
<dbReference type="SUPFAM" id="SSF109604">
    <property type="entry name" value="HD-domain/PDEase-like"/>
    <property type="match status" value="1"/>
</dbReference>
<accession>Q83PI3</accession>
<accession>Q7UB36</accession>
<protein>
    <recommendedName>
        <fullName evidence="1">Guanosine-5'-triphosphate,3'-diphosphate pyrophosphatase</fullName>
        <ecNumber evidence="1">3.6.1.40</ecNumber>
    </recommendedName>
    <alternativeName>
        <fullName evidence="1">Guanosine pentaphosphate phosphohydrolase</fullName>
    </alternativeName>
    <alternativeName>
        <fullName evidence="1">pppGpp-5'-phosphohydrolase</fullName>
    </alternativeName>
</protein>
<reference key="1">
    <citation type="journal article" date="2002" name="Nucleic Acids Res.">
        <title>Genome sequence of Shigella flexneri 2a: insights into pathogenicity through comparison with genomes of Escherichia coli K12 and O157.</title>
        <authorList>
            <person name="Jin Q."/>
            <person name="Yuan Z."/>
            <person name="Xu J."/>
            <person name="Wang Y."/>
            <person name="Shen Y."/>
            <person name="Lu W."/>
            <person name="Wang J."/>
            <person name="Liu H."/>
            <person name="Yang J."/>
            <person name="Yang F."/>
            <person name="Zhang X."/>
            <person name="Zhang J."/>
            <person name="Yang G."/>
            <person name="Wu H."/>
            <person name="Qu D."/>
            <person name="Dong J."/>
            <person name="Sun L."/>
            <person name="Xue Y."/>
            <person name="Zhao A."/>
            <person name="Gao Y."/>
            <person name="Zhu J."/>
            <person name="Kan B."/>
            <person name="Ding K."/>
            <person name="Chen S."/>
            <person name="Cheng H."/>
            <person name="Yao Z."/>
            <person name="He B."/>
            <person name="Chen R."/>
            <person name="Ma D."/>
            <person name="Qiang B."/>
            <person name="Wen Y."/>
            <person name="Hou Y."/>
            <person name="Yu J."/>
        </authorList>
    </citation>
    <scope>NUCLEOTIDE SEQUENCE [LARGE SCALE GENOMIC DNA]</scope>
    <source>
        <strain>301 / Serotype 2a</strain>
    </source>
</reference>
<reference key="2">
    <citation type="journal article" date="2003" name="Infect. Immun.">
        <title>Complete genome sequence and comparative genomics of Shigella flexneri serotype 2a strain 2457T.</title>
        <authorList>
            <person name="Wei J."/>
            <person name="Goldberg M.B."/>
            <person name="Burland V."/>
            <person name="Venkatesan M.M."/>
            <person name="Deng W."/>
            <person name="Fournier G."/>
            <person name="Mayhew G.F."/>
            <person name="Plunkett G. III"/>
            <person name="Rose D.J."/>
            <person name="Darling A."/>
            <person name="Mau B."/>
            <person name="Perna N.T."/>
            <person name="Payne S.M."/>
            <person name="Runyen-Janecky L.J."/>
            <person name="Zhou S."/>
            <person name="Schwartz D.C."/>
            <person name="Blattner F.R."/>
        </authorList>
    </citation>
    <scope>NUCLEOTIDE SEQUENCE [LARGE SCALE GENOMIC DNA]</scope>
    <source>
        <strain>ATCC 700930 / 2457T / Serotype 2a</strain>
    </source>
</reference>
<keyword id="KW-0378">Hydrolase</keyword>
<keyword id="KW-1185">Reference proteome</keyword>
<feature type="chain" id="PRO_0000194290" description="Guanosine-5'-triphosphate,3'-diphosphate pyrophosphatase">
    <location>
        <begin position="1"/>
        <end position="494"/>
    </location>
</feature>
<proteinExistence type="inferred from homology"/>
<organism>
    <name type="scientific">Shigella flexneri</name>
    <dbReference type="NCBI Taxonomy" id="623"/>
    <lineage>
        <taxon>Bacteria</taxon>
        <taxon>Pseudomonadati</taxon>
        <taxon>Pseudomonadota</taxon>
        <taxon>Gammaproteobacteria</taxon>
        <taxon>Enterobacterales</taxon>
        <taxon>Enterobacteriaceae</taxon>
        <taxon>Shigella</taxon>
    </lineage>
</organism>
<sequence length="494" mass="54942">MGSTSSLYAAIDLGSNSFHMLVVREVAGSIQTLTRIKRKVRLAAGLNSENDLSNEAMERGWQCLRLFAERLQDIPPSQIRVVATATLRLAVNAGDFIAKAQEILGCPVQVISGEEEARLIYQGVAHTTGGADQRLVVDIGGASTELVTGTGAQTTSLFSLSMGCVTWLERYFADRNLGQENFDAAEKAAREVLRPVADELRYHGWKVCVGASGTVQALQEIMMAQGMDERITLEKLQQLKQRAIHCGRLEELEIDGLTLERALVFPSGLAILIAIFTELNIQCMTLAGGALREGLVYGMLHLAVEQDIRSRTLRNIQRRFMIDIDQAQRVAKVAANFFDQVENEWHLEAISRDLLISACQLHEIGLSVDFKQAPQHAAYLVRNLDLPGFTPAQKKLLATLLLNQTNPVDLSSLHQQNAVPPRVAEQLCRLLRLAIIFASRRRDDLVPEMTLQANHELLTLTLPQGWLTQHPLGKEIIAQENQWQSYVHWPLEVH</sequence>
<gene>
    <name evidence="1" type="primary">gppA</name>
    <name type="ordered locus">SF3852</name>
    <name type="ordered locus">S3907</name>
</gene>
<name>GPPA_SHIFL</name>